<organism>
    <name type="scientific">Coxiella burnetii (strain RSA 493 / Nine Mile phase I)</name>
    <dbReference type="NCBI Taxonomy" id="227377"/>
    <lineage>
        <taxon>Bacteria</taxon>
        <taxon>Pseudomonadati</taxon>
        <taxon>Pseudomonadota</taxon>
        <taxon>Gammaproteobacteria</taxon>
        <taxon>Legionellales</taxon>
        <taxon>Coxiellaceae</taxon>
        <taxon>Coxiella</taxon>
    </lineage>
</organism>
<name>KDSB_COXBU</name>
<accession>Q83E52</accession>
<reference key="1">
    <citation type="journal article" date="2003" name="Proc. Natl. Acad. Sci. U.S.A.">
        <title>Complete genome sequence of the Q-fever pathogen, Coxiella burnetii.</title>
        <authorList>
            <person name="Seshadri R."/>
            <person name="Paulsen I.T."/>
            <person name="Eisen J.A."/>
            <person name="Read T.D."/>
            <person name="Nelson K.E."/>
            <person name="Nelson W.C."/>
            <person name="Ward N.L."/>
            <person name="Tettelin H."/>
            <person name="Davidsen T.M."/>
            <person name="Beanan M.J."/>
            <person name="DeBoy R.T."/>
            <person name="Daugherty S.C."/>
            <person name="Brinkac L.M."/>
            <person name="Madupu R."/>
            <person name="Dodson R.J."/>
            <person name="Khouri H.M."/>
            <person name="Lee K.H."/>
            <person name="Carty H.A."/>
            <person name="Scanlan D."/>
            <person name="Heinzen R.A."/>
            <person name="Thompson H.A."/>
            <person name="Samuel J.E."/>
            <person name="Fraser C.M."/>
            <person name="Heidelberg J.F."/>
        </authorList>
    </citation>
    <scope>NUCLEOTIDE SEQUENCE [LARGE SCALE GENOMIC DNA]</scope>
    <source>
        <strain>RSA 493 / Nine Mile phase I</strain>
    </source>
</reference>
<gene>
    <name evidence="1" type="primary">kdsB</name>
    <name type="ordered locus">CBU_0479</name>
</gene>
<proteinExistence type="evidence at protein level"/>
<feature type="chain" id="PRO_0000370051" description="3-deoxy-manno-octulosonate cytidylyltransferase">
    <location>
        <begin position="1"/>
        <end position="249"/>
    </location>
</feature>
<feature type="strand" evidence="3">
    <location>
        <begin position="4"/>
        <end position="8"/>
    </location>
</feature>
<feature type="helix" evidence="3">
    <location>
        <begin position="19"/>
        <end position="21"/>
    </location>
</feature>
<feature type="helix" evidence="3">
    <location>
        <begin position="29"/>
        <end position="39"/>
    </location>
</feature>
<feature type="strand" evidence="3">
    <location>
        <begin position="43"/>
        <end position="50"/>
    </location>
</feature>
<feature type="helix" evidence="3">
    <location>
        <begin position="52"/>
        <end position="60"/>
    </location>
</feature>
<feature type="strand" evidence="3">
    <location>
        <begin position="64"/>
        <end position="67"/>
    </location>
</feature>
<feature type="helix" evidence="3">
    <location>
        <begin position="75"/>
        <end position="85"/>
    </location>
</feature>
<feature type="strand" evidence="3">
    <location>
        <begin position="93"/>
        <end position="97"/>
    </location>
</feature>
<feature type="helix" evidence="3">
    <location>
        <begin position="106"/>
        <end position="118"/>
    </location>
</feature>
<feature type="strand" evidence="3">
    <location>
        <begin position="124"/>
        <end position="130"/>
    </location>
</feature>
<feature type="helix" evidence="3">
    <location>
        <begin position="134"/>
        <end position="137"/>
    </location>
</feature>
<feature type="strand" evidence="3">
    <location>
        <begin position="144"/>
        <end position="147"/>
    </location>
</feature>
<feature type="strand" evidence="3">
    <location>
        <begin position="151"/>
        <end position="159"/>
    </location>
</feature>
<feature type="turn" evidence="3">
    <location>
        <begin position="165"/>
        <end position="169"/>
    </location>
</feature>
<feature type="helix" evidence="3">
    <location>
        <begin position="171"/>
        <end position="173"/>
    </location>
</feature>
<feature type="strand" evidence="3">
    <location>
        <begin position="181"/>
        <end position="190"/>
    </location>
</feature>
<feature type="helix" evidence="3">
    <location>
        <begin position="191"/>
        <end position="199"/>
    </location>
</feature>
<feature type="helix" evidence="3">
    <location>
        <begin position="204"/>
        <end position="209"/>
    </location>
</feature>
<feature type="helix" evidence="3">
    <location>
        <begin position="214"/>
        <end position="218"/>
    </location>
</feature>
<feature type="strand" evidence="3">
    <location>
        <begin position="224"/>
        <end position="227"/>
    </location>
</feature>
<feature type="helix" evidence="3">
    <location>
        <begin position="239"/>
        <end position="246"/>
    </location>
</feature>
<evidence type="ECO:0000255" key="1">
    <source>
        <dbReference type="HAMAP-Rule" id="MF_00057"/>
    </source>
</evidence>
<evidence type="ECO:0000305" key="2"/>
<evidence type="ECO:0007829" key="3">
    <source>
        <dbReference type="PDB" id="3TQD"/>
    </source>
</evidence>
<dbReference type="EC" id="2.7.7.38" evidence="1"/>
<dbReference type="EMBL" id="AE016828">
    <property type="protein sequence ID" value="AAO90028.2"/>
    <property type="status" value="ALT_INIT"/>
    <property type="molecule type" value="Genomic_DNA"/>
</dbReference>
<dbReference type="RefSeq" id="NP_819514.2">
    <property type="nucleotide sequence ID" value="NC_002971.3"/>
</dbReference>
<dbReference type="PDB" id="3TQD">
    <property type="method" value="X-ray"/>
    <property type="resolution" value="1.80 A"/>
    <property type="chains" value="A=1-249"/>
</dbReference>
<dbReference type="PDBsum" id="3TQD"/>
<dbReference type="SMR" id="Q83E52"/>
<dbReference type="STRING" id="227377.CBU_0479"/>
<dbReference type="DNASU" id="1208363"/>
<dbReference type="EnsemblBacteria" id="AAO90028">
    <property type="protein sequence ID" value="AAO90028"/>
    <property type="gene ID" value="CBU_0479"/>
</dbReference>
<dbReference type="GeneID" id="1208363"/>
<dbReference type="KEGG" id="cbu:CBU_0479"/>
<dbReference type="PATRIC" id="fig|227377.7.peg.470"/>
<dbReference type="eggNOG" id="COG1212">
    <property type="taxonomic scope" value="Bacteria"/>
</dbReference>
<dbReference type="HOGENOM" id="CLU_065038_1_0_6"/>
<dbReference type="OrthoDB" id="9815559at2"/>
<dbReference type="UniPathway" id="UPA00030"/>
<dbReference type="UniPathway" id="UPA00358">
    <property type="reaction ID" value="UER00476"/>
</dbReference>
<dbReference type="EvolutionaryTrace" id="Q83E52"/>
<dbReference type="Proteomes" id="UP000002671">
    <property type="component" value="Chromosome"/>
</dbReference>
<dbReference type="GO" id="GO:0005829">
    <property type="term" value="C:cytosol"/>
    <property type="evidence" value="ECO:0000318"/>
    <property type="project" value="GO_Central"/>
</dbReference>
<dbReference type="GO" id="GO:0008690">
    <property type="term" value="F:3-deoxy-manno-octulosonate cytidylyltransferase activity"/>
    <property type="evidence" value="ECO:0000318"/>
    <property type="project" value="GO_Central"/>
</dbReference>
<dbReference type="GO" id="GO:0033468">
    <property type="term" value="P:CMP-keto-3-deoxy-D-manno-octulosonic acid biosynthetic process"/>
    <property type="evidence" value="ECO:0007669"/>
    <property type="project" value="UniProtKB-UniRule"/>
</dbReference>
<dbReference type="GO" id="GO:0009103">
    <property type="term" value="P:lipopolysaccharide biosynthetic process"/>
    <property type="evidence" value="ECO:0007669"/>
    <property type="project" value="UniProtKB-UniRule"/>
</dbReference>
<dbReference type="CDD" id="cd02517">
    <property type="entry name" value="CMP-KDO-Synthetase"/>
    <property type="match status" value="1"/>
</dbReference>
<dbReference type="FunFam" id="3.90.550.10:FF:000011">
    <property type="entry name" value="3-deoxy-manno-octulosonate cytidylyltransferase"/>
    <property type="match status" value="1"/>
</dbReference>
<dbReference type="Gene3D" id="3.90.550.10">
    <property type="entry name" value="Spore Coat Polysaccharide Biosynthesis Protein SpsA, Chain A"/>
    <property type="match status" value="1"/>
</dbReference>
<dbReference type="HAMAP" id="MF_00057">
    <property type="entry name" value="KdsB"/>
    <property type="match status" value="1"/>
</dbReference>
<dbReference type="InterPro" id="IPR003329">
    <property type="entry name" value="Cytidylyl_trans"/>
</dbReference>
<dbReference type="InterPro" id="IPR004528">
    <property type="entry name" value="KdsB"/>
</dbReference>
<dbReference type="InterPro" id="IPR029044">
    <property type="entry name" value="Nucleotide-diphossugar_trans"/>
</dbReference>
<dbReference type="NCBIfam" id="TIGR00466">
    <property type="entry name" value="kdsB"/>
    <property type="match status" value="1"/>
</dbReference>
<dbReference type="NCBIfam" id="NF003950">
    <property type="entry name" value="PRK05450.1-3"/>
    <property type="match status" value="1"/>
</dbReference>
<dbReference type="NCBIfam" id="NF003952">
    <property type="entry name" value="PRK05450.1-5"/>
    <property type="match status" value="1"/>
</dbReference>
<dbReference type="NCBIfam" id="NF009905">
    <property type="entry name" value="PRK13368.1"/>
    <property type="match status" value="1"/>
</dbReference>
<dbReference type="PANTHER" id="PTHR42866">
    <property type="entry name" value="3-DEOXY-MANNO-OCTULOSONATE CYTIDYLYLTRANSFERASE"/>
    <property type="match status" value="1"/>
</dbReference>
<dbReference type="PANTHER" id="PTHR42866:SF2">
    <property type="entry name" value="3-DEOXY-MANNO-OCTULOSONATE CYTIDYLYLTRANSFERASE, MITOCHONDRIAL"/>
    <property type="match status" value="1"/>
</dbReference>
<dbReference type="Pfam" id="PF02348">
    <property type="entry name" value="CTP_transf_3"/>
    <property type="match status" value="1"/>
</dbReference>
<dbReference type="SUPFAM" id="SSF53448">
    <property type="entry name" value="Nucleotide-diphospho-sugar transferases"/>
    <property type="match status" value="1"/>
</dbReference>
<comment type="function">
    <text evidence="1">Activates KDO (a required 8-carbon sugar) for incorporation into bacterial lipopolysaccharide in Gram-negative bacteria.</text>
</comment>
<comment type="catalytic activity">
    <reaction evidence="1">
        <text>3-deoxy-alpha-D-manno-oct-2-ulosonate + CTP = CMP-3-deoxy-beta-D-manno-octulosonate + diphosphate</text>
        <dbReference type="Rhea" id="RHEA:23448"/>
        <dbReference type="ChEBI" id="CHEBI:33019"/>
        <dbReference type="ChEBI" id="CHEBI:37563"/>
        <dbReference type="ChEBI" id="CHEBI:85986"/>
        <dbReference type="ChEBI" id="CHEBI:85987"/>
        <dbReference type="EC" id="2.7.7.38"/>
    </reaction>
</comment>
<comment type="pathway">
    <text evidence="1">Nucleotide-sugar biosynthesis; CMP-3-deoxy-D-manno-octulosonate biosynthesis; CMP-3-deoxy-D-manno-octulosonate from 3-deoxy-D-manno-octulosonate and CTP: step 1/1.</text>
</comment>
<comment type="pathway">
    <text evidence="1">Bacterial outer membrane biogenesis; lipopolysaccharide biosynthesis.</text>
</comment>
<comment type="subcellular location">
    <subcellularLocation>
        <location evidence="1">Cytoplasm</location>
    </subcellularLocation>
</comment>
<comment type="similarity">
    <text evidence="1">Belongs to the KdsB family.</text>
</comment>
<comment type="sequence caution" evidence="2">
    <conflict type="erroneous initiation">
        <sequence resource="EMBL-CDS" id="AAO90028"/>
    </conflict>
</comment>
<sequence length="249" mass="28025">MEFRVIIPARFDSTRLPGKALVDIAGKPMIQHVYESAIKSGAEEVVIATDDKRIRQVAEDFGAVVCMTSSDHQSGTERIAEAAVALGFEDDEIIVCLQGDEPLIPPDAIRKLAEDLDEHDNVKVASLCTPITEVDELFNPHSTKVVLNRRNYALYFSHAPIPWGRDTFSDKENLQLNGSHYRHVGIYAYRVGFLEEYLSWDACPAEKMEALEQLRILWHGGRIHMVVAKSKCPPGVDTEEDLERVRAYF</sequence>
<keyword id="KW-0002">3D-structure</keyword>
<keyword id="KW-0963">Cytoplasm</keyword>
<keyword id="KW-0448">Lipopolysaccharide biosynthesis</keyword>
<keyword id="KW-0548">Nucleotidyltransferase</keyword>
<keyword id="KW-1185">Reference proteome</keyword>
<keyword id="KW-0808">Transferase</keyword>
<protein>
    <recommendedName>
        <fullName evidence="1">3-deoxy-manno-octulosonate cytidylyltransferase</fullName>
        <ecNumber evidence="1">2.7.7.38</ecNumber>
    </recommendedName>
    <alternativeName>
        <fullName evidence="1">CMP-2-keto-3-deoxyoctulosonic acid synthase</fullName>
        <shortName evidence="1">CKS</shortName>
        <shortName evidence="1">CMP-KDO synthase</shortName>
    </alternativeName>
</protein>